<proteinExistence type="inferred from homology"/>
<dbReference type="EC" id="2.1.3.2" evidence="1"/>
<dbReference type="EMBL" id="CP001108">
    <property type="protein sequence ID" value="ACF46664.1"/>
    <property type="molecule type" value="Genomic_DNA"/>
</dbReference>
<dbReference type="RefSeq" id="WP_012506197.1">
    <property type="nucleotide sequence ID" value="NC_011059.1"/>
</dbReference>
<dbReference type="SMR" id="B4S9J4"/>
<dbReference type="STRING" id="290512.Paes_1646"/>
<dbReference type="KEGG" id="paa:Paes_1646"/>
<dbReference type="eggNOG" id="COG0540">
    <property type="taxonomic scope" value="Bacteria"/>
</dbReference>
<dbReference type="HOGENOM" id="CLU_043846_2_0_10"/>
<dbReference type="UniPathway" id="UPA00070">
    <property type="reaction ID" value="UER00116"/>
</dbReference>
<dbReference type="Proteomes" id="UP000002725">
    <property type="component" value="Chromosome"/>
</dbReference>
<dbReference type="GO" id="GO:0005829">
    <property type="term" value="C:cytosol"/>
    <property type="evidence" value="ECO:0007669"/>
    <property type="project" value="TreeGrafter"/>
</dbReference>
<dbReference type="GO" id="GO:0016597">
    <property type="term" value="F:amino acid binding"/>
    <property type="evidence" value="ECO:0007669"/>
    <property type="project" value="InterPro"/>
</dbReference>
<dbReference type="GO" id="GO:0004070">
    <property type="term" value="F:aspartate carbamoyltransferase activity"/>
    <property type="evidence" value="ECO:0007669"/>
    <property type="project" value="UniProtKB-UniRule"/>
</dbReference>
<dbReference type="GO" id="GO:0006207">
    <property type="term" value="P:'de novo' pyrimidine nucleobase biosynthetic process"/>
    <property type="evidence" value="ECO:0007669"/>
    <property type="project" value="InterPro"/>
</dbReference>
<dbReference type="GO" id="GO:0044205">
    <property type="term" value="P:'de novo' UMP biosynthetic process"/>
    <property type="evidence" value="ECO:0007669"/>
    <property type="project" value="UniProtKB-UniRule"/>
</dbReference>
<dbReference type="GO" id="GO:0006520">
    <property type="term" value="P:amino acid metabolic process"/>
    <property type="evidence" value="ECO:0007669"/>
    <property type="project" value="InterPro"/>
</dbReference>
<dbReference type="Gene3D" id="3.40.50.1370">
    <property type="entry name" value="Aspartate/ornithine carbamoyltransferase"/>
    <property type="match status" value="2"/>
</dbReference>
<dbReference type="HAMAP" id="MF_00001">
    <property type="entry name" value="Asp_carb_tr"/>
    <property type="match status" value="1"/>
</dbReference>
<dbReference type="InterPro" id="IPR006132">
    <property type="entry name" value="Asp/Orn_carbamoyltranf_P-bd"/>
</dbReference>
<dbReference type="InterPro" id="IPR006130">
    <property type="entry name" value="Asp/Orn_carbamoylTrfase"/>
</dbReference>
<dbReference type="InterPro" id="IPR036901">
    <property type="entry name" value="Asp/Orn_carbamoylTrfase_sf"/>
</dbReference>
<dbReference type="InterPro" id="IPR002082">
    <property type="entry name" value="Asp_carbamoyltransf"/>
</dbReference>
<dbReference type="InterPro" id="IPR006131">
    <property type="entry name" value="Asp_carbamoyltransf_Asp/Orn-bd"/>
</dbReference>
<dbReference type="NCBIfam" id="TIGR00670">
    <property type="entry name" value="asp_carb_tr"/>
    <property type="match status" value="1"/>
</dbReference>
<dbReference type="NCBIfam" id="NF002032">
    <property type="entry name" value="PRK00856.1"/>
    <property type="match status" value="1"/>
</dbReference>
<dbReference type="PANTHER" id="PTHR45753:SF6">
    <property type="entry name" value="ASPARTATE CARBAMOYLTRANSFERASE"/>
    <property type="match status" value="1"/>
</dbReference>
<dbReference type="PANTHER" id="PTHR45753">
    <property type="entry name" value="ORNITHINE CARBAMOYLTRANSFERASE, MITOCHONDRIAL"/>
    <property type="match status" value="1"/>
</dbReference>
<dbReference type="Pfam" id="PF00185">
    <property type="entry name" value="OTCace"/>
    <property type="match status" value="1"/>
</dbReference>
<dbReference type="Pfam" id="PF02729">
    <property type="entry name" value="OTCace_N"/>
    <property type="match status" value="1"/>
</dbReference>
<dbReference type="PRINTS" id="PR00100">
    <property type="entry name" value="AOTCASE"/>
</dbReference>
<dbReference type="PRINTS" id="PR00101">
    <property type="entry name" value="ATCASE"/>
</dbReference>
<dbReference type="SUPFAM" id="SSF53671">
    <property type="entry name" value="Aspartate/ornithine carbamoyltransferase"/>
    <property type="match status" value="1"/>
</dbReference>
<dbReference type="PROSITE" id="PS00097">
    <property type="entry name" value="CARBAMOYLTRANSFERASE"/>
    <property type="match status" value="1"/>
</dbReference>
<keyword id="KW-0665">Pyrimidine biosynthesis</keyword>
<keyword id="KW-0808">Transferase</keyword>
<protein>
    <recommendedName>
        <fullName evidence="1">Aspartate carbamoyltransferase catalytic subunit</fullName>
        <ecNumber evidence="1">2.1.3.2</ecNumber>
    </recommendedName>
    <alternativeName>
        <fullName evidence="1">Aspartate transcarbamylase</fullName>
        <shortName evidence="1">ATCase</shortName>
    </alternativeName>
</protein>
<accession>B4S9J4</accession>
<reference key="1">
    <citation type="submission" date="2008-06" db="EMBL/GenBank/DDBJ databases">
        <title>Complete sequence of chromosome of Prosthecochloris aestuarii DSM 271.</title>
        <authorList>
            <consortium name="US DOE Joint Genome Institute"/>
            <person name="Lucas S."/>
            <person name="Copeland A."/>
            <person name="Lapidus A."/>
            <person name="Glavina del Rio T."/>
            <person name="Dalin E."/>
            <person name="Tice H."/>
            <person name="Bruce D."/>
            <person name="Goodwin L."/>
            <person name="Pitluck S."/>
            <person name="Schmutz J."/>
            <person name="Larimer F."/>
            <person name="Land M."/>
            <person name="Hauser L."/>
            <person name="Kyrpides N."/>
            <person name="Anderson I."/>
            <person name="Liu Z."/>
            <person name="Li T."/>
            <person name="Zhao F."/>
            <person name="Overmann J."/>
            <person name="Bryant D.A."/>
            <person name="Richardson P."/>
        </authorList>
    </citation>
    <scope>NUCLEOTIDE SEQUENCE [LARGE SCALE GENOMIC DNA]</scope>
    <source>
        <strain>DSM 271 / SK 413</strain>
    </source>
</reference>
<gene>
    <name evidence="1" type="primary">pyrB</name>
    <name type="ordered locus">Paes_1646</name>
</gene>
<comment type="function">
    <text evidence="1">Catalyzes the condensation of carbamoyl phosphate and aspartate to form carbamoyl aspartate and inorganic phosphate, the committed step in the de novo pyrimidine nucleotide biosynthesis pathway.</text>
</comment>
<comment type="catalytic activity">
    <reaction evidence="1">
        <text>carbamoyl phosphate + L-aspartate = N-carbamoyl-L-aspartate + phosphate + H(+)</text>
        <dbReference type="Rhea" id="RHEA:20013"/>
        <dbReference type="ChEBI" id="CHEBI:15378"/>
        <dbReference type="ChEBI" id="CHEBI:29991"/>
        <dbReference type="ChEBI" id="CHEBI:32814"/>
        <dbReference type="ChEBI" id="CHEBI:43474"/>
        <dbReference type="ChEBI" id="CHEBI:58228"/>
        <dbReference type="EC" id="2.1.3.2"/>
    </reaction>
</comment>
<comment type="pathway">
    <text evidence="1">Pyrimidine metabolism; UMP biosynthesis via de novo pathway; (S)-dihydroorotate from bicarbonate: step 2/3.</text>
</comment>
<comment type="subunit">
    <text evidence="1">Heterododecamer (2C3:3R2) of six catalytic PyrB chains organized as two trimers (C3), and six regulatory PyrI chains organized as three dimers (R2).</text>
</comment>
<comment type="similarity">
    <text evidence="1">Belongs to the aspartate/ornithine carbamoyltransferase superfamily. ATCase family.</text>
</comment>
<organism>
    <name type="scientific">Prosthecochloris aestuarii (strain DSM 271 / SK 413)</name>
    <dbReference type="NCBI Taxonomy" id="290512"/>
    <lineage>
        <taxon>Bacteria</taxon>
        <taxon>Pseudomonadati</taxon>
        <taxon>Chlorobiota</taxon>
        <taxon>Chlorobiia</taxon>
        <taxon>Chlorobiales</taxon>
        <taxon>Chlorobiaceae</taxon>
        <taxon>Prosthecochloris</taxon>
    </lineage>
</organism>
<sequence length="312" mass="34121">MKHLIGLQGMAAESIKEILDRAALHKHLFINQENAIRPSLKGKRIALAFFENSTRTRFSFEIAARNLGAQTLNFSASSSSLSKGESMIDTIRNLEAMRVDAFIIRHPSSGSAEMIGKSTDKHVINAGDGSREHPTQALLDIFTLREYFGSLEGIKVMILGDILHSRVARSNIFGLTTLGAEVAVCGPATLLPVDTSRLGIRIFSQLDEALGWADAAIVLRLQLERATGGYLPSLQDYSFTFGLTDERLEKIKKHLPVLHPGPINREIEISGNVADRIQPPGFSQSMLLEQVTNGVAVRTAVLELLISPQPDT</sequence>
<name>PYRB_PROA2</name>
<feature type="chain" id="PRO_1000088785" description="Aspartate carbamoyltransferase catalytic subunit">
    <location>
        <begin position="1"/>
        <end position="312"/>
    </location>
</feature>
<feature type="binding site" evidence="1">
    <location>
        <position position="55"/>
    </location>
    <ligand>
        <name>carbamoyl phosphate</name>
        <dbReference type="ChEBI" id="CHEBI:58228"/>
    </ligand>
</feature>
<feature type="binding site" evidence="1">
    <location>
        <position position="56"/>
    </location>
    <ligand>
        <name>carbamoyl phosphate</name>
        <dbReference type="ChEBI" id="CHEBI:58228"/>
    </ligand>
</feature>
<feature type="binding site" evidence="1">
    <location>
        <position position="83"/>
    </location>
    <ligand>
        <name>L-aspartate</name>
        <dbReference type="ChEBI" id="CHEBI:29991"/>
    </ligand>
</feature>
<feature type="binding site" evidence="1">
    <location>
        <position position="105"/>
    </location>
    <ligand>
        <name>carbamoyl phosphate</name>
        <dbReference type="ChEBI" id="CHEBI:58228"/>
    </ligand>
</feature>
<feature type="binding site" evidence="1">
    <location>
        <position position="133"/>
    </location>
    <ligand>
        <name>carbamoyl phosphate</name>
        <dbReference type="ChEBI" id="CHEBI:58228"/>
    </ligand>
</feature>
<feature type="binding site" evidence="1">
    <location>
        <position position="136"/>
    </location>
    <ligand>
        <name>carbamoyl phosphate</name>
        <dbReference type="ChEBI" id="CHEBI:58228"/>
    </ligand>
</feature>
<feature type="binding site" evidence="1">
    <location>
        <position position="166"/>
    </location>
    <ligand>
        <name>L-aspartate</name>
        <dbReference type="ChEBI" id="CHEBI:29991"/>
    </ligand>
</feature>
<feature type="binding site" evidence="1">
    <location>
        <position position="220"/>
    </location>
    <ligand>
        <name>L-aspartate</name>
        <dbReference type="ChEBI" id="CHEBI:29991"/>
    </ligand>
</feature>
<feature type="binding site" evidence="1">
    <location>
        <position position="261"/>
    </location>
    <ligand>
        <name>carbamoyl phosphate</name>
        <dbReference type="ChEBI" id="CHEBI:58228"/>
    </ligand>
</feature>
<feature type="binding site" evidence="1">
    <location>
        <position position="262"/>
    </location>
    <ligand>
        <name>carbamoyl phosphate</name>
        <dbReference type="ChEBI" id="CHEBI:58228"/>
    </ligand>
</feature>
<evidence type="ECO:0000255" key="1">
    <source>
        <dbReference type="HAMAP-Rule" id="MF_00001"/>
    </source>
</evidence>